<evidence type="ECO:0000255" key="1">
    <source>
        <dbReference type="HAMAP-Rule" id="MF_02068"/>
    </source>
</evidence>
<sequence>MIYAGILAGGIGSRMGNVPLPKQFLDIDNKPILIHTIEKFILVSEFNEIIIATPAQWISHTQDILKKYNITDQRVKVVAGGTDRNETIMNIIDHIRNVNGINNDDVIVTHDAVRPFLTQRIIKENIEVAAKYGAVDTVIEAIDTIVMSKDKQNIHSIPVRNEMYQGQTPQSFNIKLLQDSYRALSSEQKEILSDACKIIVESGHAVKLVRGELYNIKVTTPYDLKVANAIIQGDIADD</sequence>
<dbReference type="EC" id="2.7.7.40" evidence="1"/>
<dbReference type="EMBL" id="CP000046">
    <property type="protein sequence ID" value="AAW38791.1"/>
    <property type="molecule type" value="Genomic_DNA"/>
</dbReference>
<dbReference type="RefSeq" id="WP_000638475.1">
    <property type="nucleotide sequence ID" value="NZ_JBGOFO010000001.1"/>
</dbReference>
<dbReference type="SMR" id="Q5HJC5"/>
<dbReference type="KEGG" id="sac:SACOL0236"/>
<dbReference type="HOGENOM" id="CLU_061281_2_3_9"/>
<dbReference type="UniPathway" id="UPA00790"/>
<dbReference type="Proteomes" id="UP000000530">
    <property type="component" value="Chromosome"/>
</dbReference>
<dbReference type="GO" id="GO:0050518">
    <property type="term" value="F:2-C-methyl-D-erythritol 4-phosphate cytidylyltransferase activity"/>
    <property type="evidence" value="ECO:0007669"/>
    <property type="project" value="TreeGrafter"/>
</dbReference>
<dbReference type="GO" id="GO:0047349">
    <property type="term" value="F:D-ribitol-5-phosphate cytidylyltransferase activity"/>
    <property type="evidence" value="ECO:0007669"/>
    <property type="project" value="UniProtKB-UniRule"/>
</dbReference>
<dbReference type="GO" id="GO:0071555">
    <property type="term" value="P:cell wall organization"/>
    <property type="evidence" value="ECO:0007669"/>
    <property type="project" value="UniProtKB-KW"/>
</dbReference>
<dbReference type="GO" id="GO:0008299">
    <property type="term" value="P:isoprenoid biosynthetic process"/>
    <property type="evidence" value="ECO:0007669"/>
    <property type="project" value="InterPro"/>
</dbReference>
<dbReference type="GO" id="GO:1902012">
    <property type="term" value="P:poly(ribitol phosphate) teichoic acid biosynthetic process"/>
    <property type="evidence" value="ECO:0007669"/>
    <property type="project" value="UniProtKB-UniRule"/>
</dbReference>
<dbReference type="CDD" id="cd02516">
    <property type="entry name" value="CDP-ME_synthetase"/>
    <property type="match status" value="1"/>
</dbReference>
<dbReference type="FunFam" id="3.90.550.10:FF:000003">
    <property type="entry name" value="2-C-methyl-D-erythritol 4-phosphate cytidylyltransferase"/>
    <property type="match status" value="1"/>
</dbReference>
<dbReference type="Gene3D" id="3.90.550.10">
    <property type="entry name" value="Spore Coat Polysaccharide Biosynthesis Protein SpsA, Chain A"/>
    <property type="match status" value="1"/>
</dbReference>
<dbReference type="HAMAP" id="MF_02068">
    <property type="entry name" value="TarI"/>
    <property type="match status" value="1"/>
</dbReference>
<dbReference type="InterPro" id="IPR034683">
    <property type="entry name" value="IspD/TarI"/>
</dbReference>
<dbReference type="InterPro" id="IPR050088">
    <property type="entry name" value="IspD/TarI_cytidylyltransf_bact"/>
</dbReference>
<dbReference type="InterPro" id="IPR018294">
    <property type="entry name" value="ISPD_synthase_CS"/>
</dbReference>
<dbReference type="InterPro" id="IPR029044">
    <property type="entry name" value="Nucleotide-diphossugar_trans"/>
</dbReference>
<dbReference type="InterPro" id="IPR034709">
    <property type="entry name" value="TarI"/>
</dbReference>
<dbReference type="NCBIfam" id="NF001183">
    <property type="entry name" value="PRK00155.1-3"/>
    <property type="match status" value="1"/>
</dbReference>
<dbReference type="NCBIfam" id="NF009924">
    <property type="entry name" value="PRK13385.1"/>
    <property type="match status" value="1"/>
</dbReference>
<dbReference type="PANTHER" id="PTHR32125">
    <property type="entry name" value="2-C-METHYL-D-ERYTHRITOL 4-PHOSPHATE CYTIDYLYLTRANSFERASE, CHLOROPLASTIC"/>
    <property type="match status" value="1"/>
</dbReference>
<dbReference type="PANTHER" id="PTHR32125:SF8">
    <property type="entry name" value="RIBITOL-5-PHOSPHATE CYTIDYLYLTRANSFERASE"/>
    <property type="match status" value="1"/>
</dbReference>
<dbReference type="Pfam" id="PF01128">
    <property type="entry name" value="IspD"/>
    <property type="match status" value="1"/>
</dbReference>
<dbReference type="SUPFAM" id="SSF53448">
    <property type="entry name" value="Nucleotide-diphospho-sugar transferases"/>
    <property type="match status" value="1"/>
</dbReference>
<dbReference type="PROSITE" id="PS01295">
    <property type="entry name" value="ISPD"/>
    <property type="match status" value="1"/>
</dbReference>
<reference key="1">
    <citation type="journal article" date="2005" name="J. Bacteriol.">
        <title>Insights on evolution of virulence and resistance from the complete genome analysis of an early methicillin-resistant Staphylococcus aureus strain and a biofilm-producing methicillin-resistant Staphylococcus epidermidis strain.</title>
        <authorList>
            <person name="Gill S.R."/>
            <person name="Fouts D.E."/>
            <person name="Archer G.L."/>
            <person name="Mongodin E.F."/>
            <person name="DeBoy R.T."/>
            <person name="Ravel J."/>
            <person name="Paulsen I.T."/>
            <person name="Kolonay J.F."/>
            <person name="Brinkac L.M."/>
            <person name="Beanan M.J."/>
            <person name="Dodson R.J."/>
            <person name="Daugherty S.C."/>
            <person name="Madupu R."/>
            <person name="Angiuoli S.V."/>
            <person name="Durkin A.S."/>
            <person name="Haft D.H."/>
            <person name="Vamathevan J.J."/>
            <person name="Khouri H."/>
            <person name="Utterback T.R."/>
            <person name="Lee C."/>
            <person name="Dimitrov G."/>
            <person name="Jiang L."/>
            <person name="Qin H."/>
            <person name="Weidman J."/>
            <person name="Tran K."/>
            <person name="Kang K.H."/>
            <person name="Hance I.R."/>
            <person name="Nelson K.E."/>
            <person name="Fraser C.M."/>
        </authorList>
    </citation>
    <scope>NUCLEOTIDE SEQUENCE [LARGE SCALE GENOMIC DNA]</scope>
    <source>
        <strain>COL</strain>
    </source>
</reference>
<gene>
    <name evidence="1" type="primary">tarI2</name>
    <name type="ordered locus">SACOL0236</name>
</gene>
<name>TARI2_STAAC</name>
<accession>Q5HJC5</accession>
<protein>
    <recommendedName>
        <fullName evidence="1">Ribitol-5-phosphate cytidylyltransferase 2</fullName>
        <ecNumber evidence="1">2.7.7.40</ecNumber>
    </recommendedName>
</protein>
<comment type="function">
    <text evidence="1">Catalyzes the transfer of the cytidylyl group of CTP to D-ribitol 5-phosphate.</text>
</comment>
<comment type="catalytic activity">
    <reaction evidence="1">
        <text>D-ribitol 5-phosphate + CTP + H(+) = CDP-L-ribitol + diphosphate</text>
        <dbReference type="Rhea" id="RHEA:12456"/>
        <dbReference type="ChEBI" id="CHEBI:15378"/>
        <dbReference type="ChEBI" id="CHEBI:33019"/>
        <dbReference type="ChEBI" id="CHEBI:37563"/>
        <dbReference type="ChEBI" id="CHEBI:57608"/>
        <dbReference type="ChEBI" id="CHEBI:57695"/>
        <dbReference type="EC" id="2.7.7.40"/>
    </reaction>
</comment>
<comment type="pathway">
    <text evidence="1">Cell wall biogenesis; poly(ribitol phosphate) teichoic acid biosynthesis.</text>
</comment>
<comment type="similarity">
    <text evidence="1">Belongs to the IspD/TarI cytidylyltransferase family. TarI subfamily.</text>
</comment>
<keyword id="KW-0961">Cell wall biogenesis/degradation</keyword>
<keyword id="KW-0548">Nucleotidyltransferase</keyword>
<keyword id="KW-0777">Teichoic acid biosynthesis</keyword>
<keyword id="KW-0808">Transferase</keyword>
<proteinExistence type="inferred from homology"/>
<organism>
    <name type="scientific">Staphylococcus aureus (strain COL)</name>
    <dbReference type="NCBI Taxonomy" id="93062"/>
    <lineage>
        <taxon>Bacteria</taxon>
        <taxon>Bacillati</taxon>
        <taxon>Bacillota</taxon>
        <taxon>Bacilli</taxon>
        <taxon>Bacillales</taxon>
        <taxon>Staphylococcaceae</taxon>
        <taxon>Staphylococcus</taxon>
    </lineage>
</organism>
<feature type="chain" id="PRO_0000075613" description="Ribitol-5-phosphate cytidylyltransferase 2">
    <location>
        <begin position="1"/>
        <end position="238"/>
    </location>
</feature>
<feature type="binding site" evidence="1">
    <location>
        <begin position="7"/>
        <end position="10"/>
    </location>
    <ligand>
        <name>CTP</name>
        <dbReference type="ChEBI" id="CHEBI:37563"/>
    </ligand>
</feature>
<feature type="binding site" evidence="1">
    <location>
        <begin position="81"/>
        <end position="87"/>
    </location>
    <ligand>
        <name>CTP</name>
        <dbReference type="ChEBI" id="CHEBI:37563"/>
    </ligand>
</feature>
<feature type="site" description="Transition state stabilizer" evidence="1">
    <location>
        <position position="14"/>
    </location>
</feature>
<feature type="site" description="Transition state stabilizer" evidence="1">
    <location>
        <position position="22"/>
    </location>
</feature>
<feature type="site" description="Positions ribitol 5-phosphate for the nucleophilic attack" evidence="1">
    <location>
        <position position="160"/>
    </location>
</feature>
<feature type="site" description="Positions ribitol 5-phosphate for the nucleophilic attack" evidence="1">
    <location>
        <position position="217"/>
    </location>
</feature>